<organism>
    <name type="scientific">Vibrio atlanticus (strain LGP32)</name>
    <name type="common">Vibrio splendidus (strain Mel32)</name>
    <dbReference type="NCBI Taxonomy" id="575788"/>
    <lineage>
        <taxon>Bacteria</taxon>
        <taxon>Pseudomonadati</taxon>
        <taxon>Pseudomonadota</taxon>
        <taxon>Gammaproteobacteria</taxon>
        <taxon>Vibrionales</taxon>
        <taxon>Vibrionaceae</taxon>
        <taxon>Vibrio</taxon>
    </lineage>
</organism>
<accession>B7VJ01</accession>
<keyword id="KW-0067">ATP-binding</keyword>
<keyword id="KW-0131">Cell cycle</keyword>
<keyword id="KW-0132">Cell division</keyword>
<keyword id="KW-0133">Cell shape</keyword>
<keyword id="KW-0961">Cell wall biogenesis/degradation</keyword>
<keyword id="KW-0963">Cytoplasm</keyword>
<keyword id="KW-0436">Ligase</keyword>
<keyword id="KW-0547">Nucleotide-binding</keyword>
<keyword id="KW-0573">Peptidoglycan synthesis</keyword>
<comment type="function">
    <text evidence="1">Cell wall formation. Catalyzes the addition of glutamate to the nucleotide precursor UDP-N-acetylmuramoyl-L-alanine (UMA).</text>
</comment>
<comment type="catalytic activity">
    <reaction evidence="1">
        <text>UDP-N-acetyl-alpha-D-muramoyl-L-alanine + D-glutamate + ATP = UDP-N-acetyl-alpha-D-muramoyl-L-alanyl-D-glutamate + ADP + phosphate + H(+)</text>
        <dbReference type="Rhea" id="RHEA:16429"/>
        <dbReference type="ChEBI" id="CHEBI:15378"/>
        <dbReference type="ChEBI" id="CHEBI:29986"/>
        <dbReference type="ChEBI" id="CHEBI:30616"/>
        <dbReference type="ChEBI" id="CHEBI:43474"/>
        <dbReference type="ChEBI" id="CHEBI:83898"/>
        <dbReference type="ChEBI" id="CHEBI:83900"/>
        <dbReference type="ChEBI" id="CHEBI:456216"/>
        <dbReference type="EC" id="6.3.2.9"/>
    </reaction>
</comment>
<comment type="pathway">
    <text evidence="1">Cell wall biogenesis; peptidoglycan biosynthesis.</text>
</comment>
<comment type="subcellular location">
    <subcellularLocation>
        <location evidence="1">Cytoplasm</location>
    </subcellularLocation>
</comment>
<comment type="similarity">
    <text evidence="1">Belongs to the MurCDEF family.</text>
</comment>
<protein>
    <recommendedName>
        <fullName evidence="1">UDP-N-acetylmuramoylalanine--D-glutamate ligase</fullName>
        <ecNumber evidence="1">6.3.2.9</ecNumber>
    </recommendedName>
    <alternativeName>
        <fullName evidence="1">D-glutamic acid-adding enzyme</fullName>
    </alternativeName>
    <alternativeName>
        <fullName evidence="1">UDP-N-acetylmuramoyl-L-alanyl-D-glutamate synthetase</fullName>
    </alternativeName>
</protein>
<evidence type="ECO:0000255" key="1">
    <source>
        <dbReference type="HAMAP-Rule" id="MF_00639"/>
    </source>
</evidence>
<sequence length="438" mass="47336">MERWQNIQNVVVVGLGITGLSVVKHLVKYQPQTHVRVIDTRELPPGKESLPESVELHSGSWNSQWLAEADLVVANPGIALATSEIQDVIQAGTPVVGDIELFGWAVNKPAVAITGSNGKSTVTDLTGVLAKAAGLNVGVGGNIGIPALDLLELDADLYVLELSSFQLETTSSLNLAAAAFLNLSEDHMDRYQGMADYRDAKLRIFNNAQYAIVNREDKETYPDHSMPLVTFGLDDQEFGVATIDGTEWLTDNGKPVLPSQDLTLVGRHNVANALVSLALLKQVGIDYNKSLEALKAYNGLTHRCQVVANKREIKWVNDSKATNVASTLAALSGLEYQGTLYLLVGGVGKGADFSELKPVLAQLDRVQLCCFGEDAAQFMPLHPSAKTFDTMRDIIESISAQLVSGDMVMLSPACASFDQFNNFMARGDAFTELAHEYA</sequence>
<proteinExistence type="inferred from homology"/>
<reference key="1">
    <citation type="submission" date="2009-02" db="EMBL/GenBank/DDBJ databases">
        <title>Vibrio splendidus str. LGP32 complete genome.</title>
        <authorList>
            <person name="Mazel D."/>
            <person name="Le Roux F."/>
        </authorList>
    </citation>
    <scope>NUCLEOTIDE SEQUENCE [LARGE SCALE GENOMIC DNA]</scope>
    <source>
        <strain>LGP32</strain>
    </source>
</reference>
<feature type="chain" id="PRO_1000147420" description="UDP-N-acetylmuramoylalanine--D-glutamate ligase">
    <location>
        <begin position="1"/>
        <end position="438"/>
    </location>
</feature>
<feature type="binding site" evidence="1">
    <location>
        <begin position="115"/>
        <end position="121"/>
    </location>
    <ligand>
        <name>ATP</name>
        <dbReference type="ChEBI" id="CHEBI:30616"/>
    </ligand>
</feature>
<dbReference type="EC" id="6.3.2.9" evidence="1"/>
<dbReference type="EMBL" id="FM954972">
    <property type="protein sequence ID" value="CAV17455.1"/>
    <property type="molecule type" value="Genomic_DNA"/>
</dbReference>
<dbReference type="SMR" id="B7VJ01"/>
<dbReference type="STRING" id="575788.VS_0448"/>
<dbReference type="KEGG" id="vsp:VS_0448"/>
<dbReference type="PATRIC" id="fig|575788.5.peg.1814"/>
<dbReference type="eggNOG" id="COG0771">
    <property type="taxonomic scope" value="Bacteria"/>
</dbReference>
<dbReference type="HOGENOM" id="CLU_032540_1_0_6"/>
<dbReference type="UniPathway" id="UPA00219"/>
<dbReference type="Proteomes" id="UP000009100">
    <property type="component" value="Chromosome 1"/>
</dbReference>
<dbReference type="GO" id="GO:0005737">
    <property type="term" value="C:cytoplasm"/>
    <property type="evidence" value="ECO:0007669"/>
    <property type="project" value="UniProtKB-SubCell"/>
</dbReference>
<dbReference type="GO" id="GO:0005524">
    <property type="term" value="F:ATP binding"/>
    <property type="evidence" value="ECO:0007669"/>
    <property type="project" value="UniProtKB-UniRule"/>
</dbReference>
<dbReference type="GO" id="GO:0008764">
    <property type="term" value="F:UDP-N-acetylmuramoylalanine-D-glutamate ligase activity"/>
    <property type="evidence" value="ECO:0007669"/>
    <property type="project" value="UniProtKB-UniRule"/>
</dbReference>
<dbReference type="GO" id="GO:0051301">
    <property type="term" value="P:cell division"/>
    <property type="evidence" value="ECO:0007669"/>
    <property type="project" value="UniProtKB-KW"/>
</dbReference>
<dbReference type="GO" id="GO:0071555">
    <property type="term" value="P:cell wall organization"/>
    <property type="evidence" value="ECO:0007669"/>
    <property type="project" value="UniProtKB-KW"/>
</dbReference>
<dbReference type="GO" id="GO:0009252">
    <property type="term" value="P:peptidoglycan biosynthetic process"/>
    <property type="evidence" value="ECO:0007669"/>
    <property type="project" value="UniProtKB-UniRule"/>
</dbReference>
<dbReference type="GO" id="GO:0008360">
    <property type="term" value="P:regulation of cell shape"/>
    <property type="evidence" value="ECO:0007669"/>
    <property type="project" value="UniProtKB-KW"/>
</dbReference>
<dbReference type="Gene3D" id="3.90.190.20">
    <property type="entry name" value="Mur ligase, C-terminal domain"/>
    <property type="match status" value="1"/>
</dbReference>
<dbReference type="Gene3D" id="3.40.1190.10">
    <property type="entry name" value="Mur-like, catalytic domain"/>
    <property type="match status" value="1"/>
</dbReference>
<dbReference type="Gene3D" id="3.40.50.720">
    <property type="entry name" value="NAD(P)-binding Rossmann-like Domain"/>
    <property type="match status" value="1"/>
</dbReference>
<dbReference type="HAMAP" id="MF_00639">
    <property type="entry name" value="MurD"/>
    <property type="match status" value="1"/>
</dbReference>
<dbReference type="InterPro" id="IPR036565">
    <property type="entry name" value="Mur-like_cat_sf"/>
</dbReference>
<dbReference type="InterPro" id="IPR004101">
    <property type="entry name" value="Mur_ligase_C"/>
</dbReference>
<dbReference type="InterPro" id="IPR036615">
    <property type="entry name" value="Mur_ligase_C_dom_sf"/>
</dbReference>
<dbReference type="InterPro" id="IPR013221">
    <property type="entry name" value="Mur_ligase_cen"/>
</dbReference>
<dbReference type="InterPro" id="IPR005762">
    <property type="entry name" value="MurD"/>
</dbReference>
<dbReference type="NCBIfam" id="TIGR01087">
    <property type="entry name" value="murD"/>
    <property type="match status" value="1"/>
</dbReference>
<dbReference type="PANTHER" id="PTHR43692">
    <property type="entry name" value="UDP-N-ACETYLMURAMOYLALANINE--D-GLUTAMATE LIGASE"/>
    <property type="match status" value="1"/>
</dbReference>
<dbReference type="PANTHER" id="PTHR43692:SF1">
    <property type="entry name" value="UDP-N-ACETYLMURAMOYLALANINE--D-GLUTAMATE LIGASE"/>
    <property type="match status" value="1"/>
</dbReference>
<dbReference type="Pfam" id="PF02875">
    <property type="entry name" value="Mur_ligase_C"/>
    <property type="match status" value="1"/>
</dbReference>
<dbReference type="Pfam" id="PF08245">
    <property type="entry name" value="Mur_ligase_M"/>
    <property type="match status" value="1"/>
</dbReference>
<dbReference type="Pfam" id="PF21799">
    <property type="entry name" value="MurD-like_N"/>
    <property type="match status" value="1"/>
</dbReference>
<dbReference type="SUPFAM" id="SSF51984">
    <property type="entry name" value="MurCD N-terminal domain"/>
    <property type="match status" value="1"/>
</dbReference>
<dbReference type="SUPFAM" id="SSF53623">
    <property type="entry name" value="MurD-like peptide ligases, catalytic domain"/>
    <property type="match status" value="1"/>
</dbReference>
<dbReference type="SUPFAM" id="SSF53244">
    <property type="entry name" value="MurD-like peptide ligases, peptide-binding domain"/>
    <property type="match status" value="1"/>
</dbReference>
<name>MURD_VIBA3</name>
<gene>
    <name evidence="1" type="primary">murD</name>
    <name type="ordered locus">VS_0448</name>
</gene>